<protein>
    <recommendedName>
        <fullName>Biotin transport ATP-binding protein BioM</fullName>
        <ecNumber>7.6.2.-</ecNumber>
    </recommendedName>
    <alternativeName>
        <fullName>ECF transporter A component BioM</fullName>
    </alternativeName>
</protein>
<sequence>MQAIDIGHVTLERDGTGVFSDLTLRLTERRIGIVGRNGAGKSSLIRLITGLVTPQKGRVVVNGVDVAADRAGALGTVGLLFQNPDHQIIFPVVRDEIAFGLEQKGLKRAAALARAEAVLAAQGRADWGDRLCHTLSQGQRQLLCLMSILAMEPDWILFDEPFNALDLPTALSIEARIAGLAQNVVLVTHDPSRLTGFDRILWLEGGRIEADGPPAEVLPRYIAAMQALARAGAC</sequence>
<feature type="chain" id="PRO_0000409019" description="Biotin transport ATP-binding protein BioM">
    <location>
        <begin position="1"/>
        <end position="234"/>
    </location>
</feature>
<feature type="domain" description="ABC transporter" evidence="1">
    <location>
        <begin position="1"/>
        <end position="230"/>
    </location>
</feature>
<feature type="binding site" evidence="1">
    <location>
        <begin position="35"/>
        <end position="42"/>
    </location>
    <ligand>
        <name>ATP</name>
        <dbReference type="ChEBI" id="CHEBI:30616"/>
    </ligand>
</feature>
<feature type="mutagenesis site" description="Diminished biotin uptake, loss of ATPase activity, BioMNY complexes still form." evidence="2">
    <original>K</original>
    <variation>N</variation>
    <location>
        <position position="41"/>
    </location>
</feature>
<comment type="function">
    <text evidence="2">Required for biotin uptake under very low (pM) biotin concentrations but not under higher (nM) concentrations.</text>
</comment>
<comment type="subunit">
    <text evidence="2">Part of a biotin transporter holocomplex composed of BioM, BioN and BioY. BioMN complexes can be readily purified, but not BioMY complexes. Only the BioMNY complex has ATPase activity.</text>
</comment>
<comment type="subcellular location">
    <subcellularLocation>
        <location evidence="4">Cell inner membrane</location>
        <topology evidence="4">Peripheral membrane protein</topology>
    </subcellularLocation>
</comment>
<comment type="similarity">
    <text evidence="3">Belongs to the ABC transporter superfamily.</text>
</comment>
<keyword id="KW-0067">ATP-binding</keyword>
<keyword id="KW-0997">Cell inner membrane</keyword>
<keyword id="KW-1003">Cell membrane</keyword>
<keyword id="KW-0472">Membrane</keyword>
<keyword id="KW-0547">Nucleotide-binding</keyword>
<keyword id="KW-1185">Reference proteome</keyword>
<keyword id="KW-1278">Translocase</keyword>
<keyword id="KW-0813">Transport</keyword>
<evidence type="ECO:0000255" key="1">
    <source>
        <dbReference type="PROSITE-ProRule" id="PRU00434"/>
    </source>
</evidence>
<evidence type="ECO:0000269" key="2">
    <source>
    </source>
</evidence>
<evidence type="ECO:0000305" key="3"/>
<evidence type="ECO:0000305" key="4">
    <source>
    </source>
</evidence>
<name>BIOM_RHOCB</name>
<accession>D5ARH0</accession>
<dbReference type="EC" id="7.6.2.-"/>
<dbReference type="EMBL" id="CP001312">
    <property type="protein sequence ID" value="ADE86975.1"/>
    <property type="molecule type" value="Genomic_DNA"/>
</dbReference>
<dbReference type="RefSeq" id="WP_013068948.1">
    <property type="nucleotide sequence ID" value="NC_014034.1"/>
</dbReference>
<dbReference type="SMR" id="D5ARH0"/>
<dbReference type="STRING" id="272942.RCAP_rcc03251"/>
<dbReference type="TCDB" id="3.A.1.25.7">
    <property type="family name" value="the atp-binding cassette (abc) superfamily"/>
</dbReference>
<dbReference type="GeneID" id="31492032"/>
<dbReference type="KEGG" id="rcp:RCAP_rcc03251"/>
<dbReference type="eggNOG" id="COG1122">
    <property type="taxonomic scope" value="Bacteria"/>
</dbReference>
<dbReference type="HOGENOM" id="CLU_000604_1_22_5"/>
<dbReference type="OrthoDB" id="9782163at2"/>
<dbReference type="Proteomes" id="UP000002361">
    <property type="component" value="Chromosome"/>
</dbReference>
<dbReference type="GO" id="GO:0043190">
    <property type="term" value="C:ATP-binding cassette (ABC) transporter complex"/>
    <property type="evidence" value="ECO:0007669"/>
    <property type="project" value="TreeGrafter"/>
</dbReference>
<dbReference type="GO" id="GO:0005524">
    <property type="term" value="F:ATP binding"/>
    <property type="evidence" value="ECO:0007669"/>
    <property type="project" value="UniProtKB-KW"/>
</dbReference>
<dbReference type="GO" id="GO:0016887">
    <property type="term" value="F:ATP hydrolysis activity"/>
    <property type="evidence" value="ECO:0007669"/>
    <property type="project" value="InterPro"/>
</dbReference>
<dbReference type="GO" id="GO:0042626">
    <property type="term" value="F:ATPase-coupled transmembrane transporter activity"/>
    <property type="evidence" value="ECO:0007669"/>
    <property type="project" value="TreeGrafter"/>
</dbReference>
<dbReference type="CDD" id="cd03225">
    <property type="entry name" value="ABC_cobalt_CbiO_domain1"/>
    <property type="match status" value="1"/>
</dbReference>
<dbReference type="Gene3D" id="3.40.50.300">
    <property type="entry name" value="P-loop containing nucleotide triphosphate hydrolases"/>
    <property type="match status" value="1"/>
</dbReference>
<dbReference type="InterPro" id="IPR003593">
    <property type="entry name" value="AAA+_ATPase"/>
</dbReference>
<dbReference type="InterPro" id="IPR003439">
    <property type="entry name" value="ABC_transporter-like_ATP-bd"/>
</dbReference>
<dbReference type="InterPro" id="IPR015856">
    <property type="entry name" value="ABC_transpr_CbiO/EcfA_su"/>
</dbReference>
<dbReference type="InterPro" id="IPR050095">
    <property type="entry name" value="ECF_ABC_transporter_ATP-bd"/>
</dbReference>
<dbReference type="InterPro" id="IPR027417">
    <property type="entry name" value="P-loop_NTPase"/>
</dbReference>
<dbReference type="PANTHER" id="PTHR43553:SF24">
    <property type="entry name" value="ENERGY-COUPLING FACTOR TRANSPORTER ATP-BINDING PROTEIN ECFA1"/>
    <property type="match status" value="1"/>
</dbReference>
<dbReference type="PANTHER" id="PTHR43553">
    <property type="entry name" value="HEAVY METAL TRANSPORTER"/>
    <property type="match status" value="1"/>
</dbReference>
<dbReference type="Pfam" id="PF00005">
    <property type="entry name" value="ABC_tran"/>
    <property type="match status" value="1"/>
</dbReference>
<dbReference type="SMART" id="SM00382">
    <property type="entry name" value="AAA"/>
    <property type="match status" value="1"/>
</dbReference>
<dbReference type="SUPFAM" id="SSF52540">
    <property type="entry name" value="P-loop containing nucleoside triphosphate hydrolases"/>
    <property type="match status" value="1"/>
</dbReference>
<dbReference type="PROSITE" id="PS50893">
    <property type="entry name" value="ABC_TRANSPORTER_2"/>
    <property type="match status" value="1"/>
</dbReference>
<gene>
    <name type="primary">bioM</name>
    <name type="ordered locus">RCAP_rcc03251</name>
</gene>
<proteinExistence type="evidence at protein level"/>
<reference key="1">
    <citation type="journal article" date="2010" name="J. Bacteriol.">
        <title>Complete genome sequence of the photosynthetic purple nonsulfur bacterium Rhodobacter capsulatus SB 1003.</title>
        <authorList>
            <person name="Strnad H."/>
            <person name="Lapidus A."/>
            <person name="Paces J."/>
            <person name="Ulbrich P."/>
            <person name="Vlcek C."/>
            <person name="Paces V."/>
            <person name="Haselkorn R."/>
        </authorList>
    </citation>
    <scope>NUCLEOTIDE SEQUENCE [LARGE SCALE GENOMIC DNA]</scope>
    <source>
        <strain>ATCC BAA-309 / NBRC 16581 / SB1003</strain>
    </source>
</reference>
<reference key="2">
    <citation type="journal article" date="2007" name="Proc. Natl. Acad. Sci. U.S.A.">
        <title>Biotin uptake in prokaryotes by solute transporters with an optional ATP-binding cassette-containing module.</title>
        <authorList>
            <person name="Hebbeln P."/>
            <person name="Rodionov D.A."/>
            <person name="Alfandega A."/>
            <person name="Eitinger T."/>
        </authorList>
    </citation>
    <scope>EXPRESSION IN E.COLI</scope>
    <scope>FUNCTION IN BIOTIN UPTAKE</scope>
    <scope>SUBUNIT</scope>
    <scope>SUBCELLULAR LOCATION</scope>
    <scope>MUTAGENESIS OF LYS-41</scope>
    <source>
        <strain>ATCC BAA-309 / NBRC 16581 / SB1003</strain>
    </source>
</reference>
<organism>
    <name type="scientific">Rhodobacter capsulatus (strain ATCC BAA-309 / NBRC 16581 / SB1003)</name>
    <dbReference type="NCBI Taxonomy" id="272942"/>
    <lineage>
        <taxon>Bacteria</taxon>
        <taxon>Pseudomonadati</taxon>
        <taxon>Pseudomonadota</taxon>
        <taxon>Alphaproteobacteria</taxon>
        <taxon>Rhodobacterales</taxon>
        <taxon>Rhodobacter group</taxon>
        <taxon>Rhodobacter</taxon>
    </lineage>
</organism>